<evidence type="ECO:0000255" key="1">
    <source>
        <dbReference type="HAMAP-Rule" id="MF_01874"/>
    </source>
</evidence>
<proteinExistence type="inferred from homology"/>
<gene>
    <name evidence="1" type="primary">yeaL</name>
    <name type="ordered locus">SEN1771</name>
</gene>
<name>YEAL_SALEP</name>
<keyword id="KW-1003">Cell membrane</keyword>
<keyword id="KW-0472">Membrane</keyword>
<keyword id="KW-0812">Transmembrane</keyword>
<keyword id="KW-1133">Transmembrane helix</keyword>
<organism>
    <name type="scientific">Salmonella enteritidis PT4 (strain P125109)</name>
    <dbReference type="NCBI Taxonomy" id="550537"/>
    <lineage>
        <taxon>Bacteria</taxon>
        <taxon>Pseudomonadati</taxon>
        <taxon>Pseudomonadota</taxon>
        <taxon>Gammaproteobacteria</taxon>
        <taxon>Enterobacterales</taxon>
        <taxon>Enterobacteriaceae</taxon>
        <taxon>Salmonella</taxon>
    </lineage>
</organism>
<sequence>MFDVTLLILLGLAALGFISHNTTVAVSILVLIIVRVTPLNTFFPWIEKQGLTVGIIILTIGVMAPIASGTLPPSTLIHSFVNWKSLVAIAVGVFVSWLGGRGITLMGNQPQLVAGLLVGTVLGVALFRGVPVGPLIAAGLVSLIVGKQ</sequence>
<protein>
    <recommendedName>
        <fullName evidence="1">UPF0756 membrane protein YeaL</fullName>
    </recommendedName>
</protein>
<comment type="subcellular location">
    <subcellularLocation>
        <location evidence="1">Cell membrane</location>
        <topology evidence="1">Multi-pass membrane protein</topology>
    </subcellularLocation>
</comment>
<comment type="similarity">
    <text evidence="1">Belongs to the UPF0756 family.</text>
</comment>
<accession>B5QWM0</accession>
<feature type="chain" id="PRO_5000397328" description="UPF0756 membrane protein YeaL">
    <location>
        <begin position="1"/>
        <end position="148"/>
    </location>
</feature>
<feature type="transmembrane region" description="Helical" evidence="1">
    <location>
        <begin position="14"/>
        <end position="34"/>
    </location>
</feature>
<feature type="transmembrane region" description="Helical" evidence="1">
    <location>
        <begin position="51"/>
        <end position="71"/>
    </location>
</feature>
<feature type="transmembrane region" description="Helical" evidence="1">
    <location>
        <begin position="86"/>
        <end position="106"/>
    </location>
</feature>
<feature type="transmembrane region" description="Helical" evidence="1">
    <location>
        <begin position="121"/>
        <end position="141"/>
    </location>
</feature>
<dbReference type="EMBL" id="AM933172">
    <property type="protein sequence ID" value="CAR33352.1"/>
    <property type="molecule type" value="Genomic_DNA"/>
</dbReference>
<dbReference type="RefSeq" id="WP_000460698.1">
    <property type="nucleotide sequence ID" value="NC_011294.1"/>
</dbReference>
<dbReference type="KEGG" id="set:SEN1771"/>
<dbReference type="HOGENOM" id="CLU_125889_0_0_6"/>
<dbReference type="Proteomes" id="UP000000613">
    <property type="component" value="Chromosome"/>
</dbReference>
<dbReference type="GO" id="GO:0005886">
    <property type="term" value="C:plasma membrane"/>
    <property type="evidence" value="ECO:0007669"/>
    <property type="project" value="UniProtKB-SubCell"/>
</dbReference>
<dbReference type="HAMAP" id="MF_01874">
    <property type="entry name" value="UPF0756"/>
    <property type="match status" value="1"/>
</dbReference>
<dbReference type="InterPro" id="IPR007382">
    <property type="entry name" value="UPF0756_TM"/>
</dbReference>
<dbReference type="PANTHER" id="PTHR38452">
    <property type="entry name" value="UPF0756 MEMBRANE PROTEIN YEAL"/>
    <property type="match status" value="1"/>
</dbReference>
<dbReference type="PANTHER" id="PTHR38452:SF1">
    <property type="entry name" value="UPF0756 MEMBRANE PROTEIN YEAL"/>
    <property type="match status" value="1"/>
</dbReference>
<dbReference type="Pfam" id="PF04284">
    <property type="entry name" value="DUF441"/>
    <property type="match status" value="1"/>
</dbReference>
<reference key="1">
    <citation type="journal article" date="2008" name="Genome Res.">
        <title>Comparative genome analysis of Salmonella enteritidis PT4 and Salmonella gallinarum 287/91 provides insights into evolutionary and host adaptation pathways.</title>
        <authorList>
            <person name="Thomson N.R."/>
            <person name="Clayton D.J."/>
            <person name="Windhorst D."/>
            <person name="Vernikos G."/>
            <person name="Davidson S."/>
            <person name="Churcher C."/>
            <person name="Quail M.A."/>
            <person name="Stevens M."/>
            <person name="Jones M.A."/>
            <person name="Watson M."/>
            <person name="Barron A."/>
            <person name="Layton A."/>
            <person name="Pickard D."/>
            <person name="Kingsley R.A."/>
            <person name="Bignell A."/>
            <person name="Clark L."/>
            <person name="Harris B."/>
            <person name="Ormond D."/>
            <person name="Abdellah Z."/>
            <person name="Brooks K."/>
            <person name="Cherevach I."/>
            <person name="Chillingworth T."/>
            <person name="Woodward J."/>
            <person name="Norberczak H."/>
            <person name="Lord A."/>
            <person name="Arrowsmith C."/>
            <person name="Jagels K."/>
            <person name="Moule S."/>
            <person name="Mungall K."/>
            <person name="Saunders M."/>
            <person name="Whitehead S."/>
            <person name="Chabalgoity J.A."/>
            <person name="Maskell D."/>
            <person name="Humphreys T."/>
            <person name="Roberts M."/>
            <person name="Barrow P.A."/>
            <person name="Dougan G."/>
            <person name="Parkhill J."/>
        </authorList>
    </citation>
    <scope>NUCLEOTIDE SEQUENCE [LARGE SCALE GENOMIC DNA]</scope>
    <source>
        <strain>P125109</strain>
    </source>
</reference>